<reference key="1">
    <citation type="journal article" date="2003" name="Nat. Biotechnol.">
        <title>The genome sequence of the entomopathogenic bacterium Photorhabdus luminescens.</title>
        <authorList>
            <person name="Duchaud E."/>
            <person name="Rusniok C."/>
            <person name="Frangeul L."/>
            <person name="Buchrieser C."/>
            <person name="Givaudan A."/>
            <person name="Taourit S."/>
            <person name="Bocs S."/>
            <person name="Boursaux-Eude C."/>
            <person name="Chandler M."/>
            <person name="Charles J.-F."/>
            <person name="Dassa E."/>
            <person name="Derose R."/>
            <person name="Derzelle S."/>
            <person name="Freyssinet G."/>
            <person name="Gaudriault S."/>
            <person name="Medigue C."/>
            <person name="Lanois A."/>
            <person name="Powell K."/>
            <person name="Siguier P."/>
            <person name="Vincent R."/>
            <person name="Wingate V."/>
            <person name="Zouine M."/>
            <person name="Glaser P."/>
            <person name="Boemare N."/>
            <person name="Danchin A."/>
            <person name="Kunst F."/>
        </authorList>
    </citation>
    <scope>NUCLEOTIDE SEQUENCE [LARGE SCALE GENOMIC DNA]</scope>
    <source>
        <strain>DSM 15139 / CIP 105565 / TT01</strain>
    </source>
</reference>
<accession>Q7N6F7</accession>
<sequence>MNEYHNSLKSKESVKDERQQKLQPPSMYQVILNNDDYTPMEFVVDVLRKFFSYDIERATQLMLDVHYQGKAVCGVYTAEVAETKAAQVNMYAKEYGHPLLCTLEKV</sequence>
<feature type="chain" id="PRO_0000215732" description="ATP-dependent Clp protease adapter protein ClpS">
    <location>
        <begin position="1"/>
        <end position="106"/>
    </location>
</feature>
<feature type="region of interest" description="Disordered" evidence="2">
    <location>
        <begin position="1"/>
        <end position="22"/>
    </location>
</feature>
<feature type="compositionally biased region" description="Basic and acidic residues" evidence="2">
    <location>
        <begin position="9"/>
        <end position="20"/>
    </location>
</feature>
<keyword id="KW-1185">Reference proteome</keyword>
<proteinExistence type="inferred from homology"/>
<evidence type="ECO:0000255" key="1">
    <source>
        <dbReference type="HAMAP-Rule" id="MF_00302"/>
    </source>
</evidence>
<evidence type="ECO:0000256" key="2">
    <source>
        <dbReference type="SAM" id="MobiDB-lite"/>
    </source>
</evidence>
<gene>
    <name evidence="1" type="primary">clpS</name>
    <name type="ordered locus">plu1593</name>
</gene>
<name>CLPS_PHOLL</name>
<protein>
    <recommendedName>
        <fullName evidence="1">ATP-dependent Clp protease adapter protein ClpS</fullName>
    </recommendedName>
</protein>
<organism>
    <name type="scientific">Photorhabdus laumondii subsp. laumondii (strain DSM 15139 / CIP 105565 / TT01)</name>
    <name type="common">Photorhabdus luminescens subsp. laumondii</name>
    <dbReference type="NCBI Taxonomy" id="243265"/>
    <lineage>
        <taxon>Bacteria</taxon>
        <taxon>Pseudomonadati</taxon>
        <taxon>Pseudomonadota</taxon>
        <taxon>Gammaproteobacteria</taxon>
        <taxon>Enterobacterales</taxon>
        <taxon>Morganellaceae</taxon>
        <taxon>Photorhabdus</taxon>
    </lineage>
</organism>
<dbReference type="EMBL" id="BX571864">
    <property type="protein sequence ID" value="CAE13886.1"/>
    <property type="molecule type" value="Genomic_DNA"/>
</dbReference>
<dbReference type="RefSeq" id="WP_011145890.1">
    <property type="nucleotide sequence ID" value="NC_005126.1"/>
</dbReference>
<dbReference type="SMR" id="Q7N6F7"/>
<dbReference type="STRING" id="243265.plu1593"/>
<dbReference type="GeneID" id="48847881"/>
<dbReference type="KEGG" id="plu:plu1593"/>
<dbReference type="eggNOG" id="COG2127">
    <property type="taxonomic scope" value="Bacteria"/>
</dbReference>
<dbReference type="HOGENOM" id="CLU_134358_2_1_6"/>
<dbReference type="OrthoDB" id="9796121at2"/>
<dbReference type="Proteomes" id="UP000002514">
    <property type="component" value="Chromosome"/>
</dbReference>
<dbReference type="GO" id="GO:0030163">
    <property type="term" value="P:protein catabolic process"/>
    <property type="evidence" value="ECO:0007669"/>
    <property type="project" value="InterPro"/>
</dbReference>
<dbReference type="GO" id="GO:0006508">
    <property type="term" value="P:proteolysis"/>
    <property type="evidence" value="ECO:0007669"/>
    <property type="project" value="UniProtKB-UniRule"/>
</dbReference>
<dbReference type="FunFam" id="3.30.1390.10:FF:000002">
    <property type="entry name" value="ATP-dependent Clp protease adapter protein ClpS"/>
    <property type="match status" value="1"/>
</dbReference>
<dbReference type="Gene3D" id="3.30.1390.10">
    <property type="match status" value="1"/>
</dbReference>
<dbReference type="HAMAP" id="MF_00302">
    <property type="entry name" value="ClpS"/>
    <property type="match status" value="1"/>
</dbReference>
<dbReference type="InterPro" id="IPR022935">
    <property type="entry name" value="ClpS"/>
</dbReference>
<dbReference type="InterPro" id="IPR003769">
    <property type="entry name" value="ClpS_core"/>
</dbReference>
<dbReference type="InterPro" id="IPR014719">
    <property type="entry name" value="Ribosomal_bL12_C/ClpS-like"/>
</dbReference>
<dbReference type="NCBIfam" id="NF000670">
    <property type="entry name" value="PRK00033.1-3"/>
    <property type="match status" value="1"/>
</dbReference>
<dbReference type="NCBIfam" id="NF000672">
    <property type="entry name" value="PRK00033.1-5"/>
    <property type="match status" value="1"/>
</dbReference>
<dbReference type="PANTHER" id="PTHR33473:SF19">
    <property type="entry name" value="ATP-DEPENDENT CLP PROTEASE ADAPTER PROTEIN CLPS"/>
    <property type="match status" value="1"/>
</dbReference>
<dbReference type="PANTHER" id="PTHR33473">
    <property type="entry name" value="ATP-DEPENDENT CLP PROTEASE ADAPTER PROTEIN CLPS1, CHLOROPLASTIC"/>
    <property type="match status" value="1"/>
</dbReference>
<dbReference type="Pfam" id="PF02617">
    <property type="entry name" value="ClpS"/>
    <property type="match status" value="1"/>
</dbReference>
<dbReference type="SUPFAM" id="SSF54736">
    <property type="entry name" value="ClpS-like"/>
    <property type="match status" value="1"/>
</dbReference>
<comment type="function">
    <text evidence="1">Involved in the modulation of the specificity of the ClpAP-mediated ATP-dependent protein degradation.</text>
</comment>
<comment type="subunit">
    <text evidence="1">Binds to the N-terminal domain of the chaperone ClpA.</text>
</comment>
<comment type="similarity">
    <text evidence="1">Belongs to the ClpS family.</text>
</comment>